<keyword id="KW-0131">Cell cycle</keyword>
<keyword id="KW-0132">Cell division</keyword>
<keyword id="KW-0997">Cell inner membrane</keyword>
<keyword id="KW-1003">Cell membrane</keyword>
<keyword id="KW-0133">Cell shape</keyword>
<keyword id="KW-0961">Cell wall biogenesis/degradation</keyword>
<keyword id="KW-0460">Magnesium</keyword>
<keyword id="KW-0472">Membrane</keyword>
<keyword id="KW-0479">Metal-binding</keyword>
<keyword id="KW-0573">Peptidoglycan synthesis</keyword>
<keyword id="KW-0808">Transferase</keyword>
<keyword id="KW-0812">Transmembrane</keyword>
<keyword id="KW-1133">Transmembrane helix</keyword>
<dbReference type="EC" id="2.7.8.13" evidence="1"/>
<dbReference type="EMBL" id="FM209186">
    <property type="protein sequence ID" value="CAW29548.1"/>
    <property type="molecule type" value="Genomic_DNA"/>
</dbReference>
<dbReference type="RefSeq" id="WP_003094129.1">
    <property type="nucleotide sequence ID" value="NC_011770.1"/>
</dbReference>
<dbReference type="SMR" id="B7UZJ3"/>
<dbReference type="KEGG" id="pag:PLES_47941"/>
<dbReference type="HOGENOM" id="CLU_023982_0_0_6"/>
<dbReference type="UniPathway" id="UPA00219"/>
<dbReference type="GO" id="GO:0005886">
    <property type="term" value="C:plasma membrane"/>
    <property type="evidence" value="ECO:0007669"/>
    <property type="project" value="UniProtKB-SubCell"/>
</dbReference>
<dbReference type="GO" id="GO:0046872">
    <property type="term" value="F:metal ion binding"/>
    <property type="evidence" value="ECO:0007669"/>
    <property type="project" value="UniProtKB-KW"/>
</dbReference>
<dbReference type="GO" id="GO:0008963">
    <property type="term" value="F:phospho-N-acetylmuramoyl-pentapeptide-transferase activity"/>
    <property type="evidence" value="ECO:0007669"/>
    <property type="project" value="UniProtKB-UniRule"/>
</dbReference>
<dbReference type="GO" id="GO:0051992">
    <property type="term" value="F:UDP-N-acetylmuramoyl-L-alanyl-D-glutamyl-meso-2,6-diaminopimelyl-D-alanyl-D-alanine:undecaprenyl-phosphate transferase activity"/>
    <property type="evidence" value="ECO:0007669"/>
    <property type="project" value="RHEA"/>
</dbReference>
<dbReference type="GO" id="GO:0051301">
    <property type="term" value="P:cell division"/>
    <property type="evidence" value="ECO:0007669"/>
    <property type="project" value="UniProtKB-KW"/>
</dbReference>
<dbReference type="GO" id="GO:0071555">
    <property type="term" value="P:cell wall organization"/>
    <property type="evidence" value="ECO:0007669"/>
    <property type="project" value="UniProtKB-KW"/>
</dbReference>
<dbReference type="GO" id="GO:0009252">
    <property type="term" value="P:peptidoglycan biosynthetic process"/>
    <property type="evidence" value="ECO:0007669"/>
    <property type="project" value="UniProtKB-UniRule"/>
</dbReference>
<dbReference type="GO" id="GO:0008360">
    <property type="term" value="P:regulation of cell shape"/>
    <property type="evidence" value="ECO:0007669"/>
    <property type="project" value="UniProtKB-KW"/>
</dbReference>
<dbReference type="CDD" id="cd06852">
    <property type="entry name" value="GT_MraY"/>
    <property type="match status" value="1"/>
</dbReference>
<dbReference type="HAMAP" id="MF_00038">
    <property type="entry name" value="MraY"/>
    <property type="match status" value="1"/>
</dbReference>
<dbReference type="InterPro" id="IPR000715">
    <property type="entry name" value="Glycosyl_transferase_4"/>
</dbReference>
<dbReference type="InterPro" id="IPR003524">
    <property type="entry name" value="PNAcMuramoyl-5peptid_Trfase"/>
</dbReference>
<dbReference type="InterPro" id="IPR018480">
    <property type="entry name" value="PNAcMuramoyl-5peptid_Trfase_CS"/>
</dbReference>
<dbReference type="NCBIfam" id="TIGR00445">
    <property type="entry name" value="mraY"/>
    <property type="match status" value="1"/>
</dbReference>
<dbReference type="PANTHER" id="PTHR22926">
    <property type="entry name" value="PHOSPHO-N-ACETYLMURAMOYL-PENTAPEPTIDE-TRANSFERASE"/>
    <property type="match status" value="1"/>
</dbReference>
<dbReference type="PANTHER" id="PTHR22926:SF5">
    <property type="entry name" value="PHOSPHO-N-ACETYLMURAMOYL-PENTAPEPTIDE-TRANSFERASE HOMOLOG"/>
    <property type="match status" value="1"/>
</dbReference>
<dbReference type="Pfam" id="PF00953">
    <property type="entry name" value="Glycos_transf_4"/>
    <property type="match status" value="1"/>
</dbReference>
<dbReference type="PROSITE" id="PS01347">
    <property type="entry name" value="MRAY_1"/>
    <property type="match status" value="1"/>
</dbReference>
<dbReference type="PROSITE" id="PS01348">
    <property type="entry name" value="MRAY_2"/>
    <property type="match status" value="1"/>
</dbReference>
<accession>B7UZJ3</accession>
<organism>
    <name type="scientific">Pseudomonas aeruginosa (strain LESB58)</name>
    <dbReference type="NCBI Taxonomy" id="557722"/>
    <lineage>
        <taxon>Bacteria</taxon>
        <taxon>Pseudomonadati</taxon>
        <taxon>Pseudomonadota</taxon>
        <taxon>Gammaproteobacteria</taxon>
        <taxon>Pseudomonadales</taxon>
        <taxon>Pseudomonadaceae</taxon>
        <taxon>Pseudomonas</taxon>
    </lineage>
</organism>
<reference key="1">
    <citation type="journal article" date="2009" name="Genome Res.">
        <title>Newly introduced genomic prophage islands are critical determinants of in vivo competitiveness in the Liverpool epidemic strain of Pseudomonas aeruginosa.</title>
        <authorList>
            <person name="Winstanley C."/>
            <person name="Langille M.G.I."/>
            <person name="Fothergill J.L."/>
            <person name="Kukavica-Ibrulj I."/>
            <person name="Paradis-Bleau C."/>
            <person name="Sanschagrin F."/>
            <person name="Thomson N.R."/>
            <person name="Winsor G.L."/>
            <person name="Quail M.A."/>
            <person name="Lennard N."/>
            <person name="Bignell A."/>
            <person name="Clarke L."/>
            <person name="Seeger K."/>
            <person name="Saunders D."/>
            <person name="Harris D."/>
            <person name="Parkhill J."/>
            <person name="Hancock R.E.W."/>
            <person name="Brinkman F.S.L."/>
            <person name="Levesque R.C."/>
        </authorList>
    </citation>
    <scope>NUCLEOTIDE SEQUENCE [LARGE SCALE GENOMIC DNA]</scope>
    <source>
        <strain>LESB58</strain>
    </source>
</reference>
<comment type="function">
    <text evidence="1">Catalyzes the initial step of the lipid cycle reactions in the biosynthesis of the cell wall peptidoglycan: transfers peptidoglycan precursor phospho-MurNAc-pentapeptide from UDP-MurNAc-pentapeptide onto the lipid carrier undecaprenyl phosphate, yielding undecaprenyl-pyrophosphoryl-MurNAc-pentapeptide, known as lipid I.</text>
</comment>
<comment type="catalytic activity">
    <reaction evidence="1">
        <text>UDP-N-acetyl-alpha-D-muramoyl-L-alanyl-gamma-D-glutamyl-meso-2,6-diaminopimeloyl-D-alanyl-D-alanine + di-trans,octa-cis-undecaprenyl phosphate = di-trans,octa-cis-undecaprenyl diphospho-N-acetyl-alpha-D-muramoyl-L-alanyl-D-glutamyl-meso-2,6-diaminopimeloyl-D-alanyl-D-alanine + UMP</text>
        <dbReference type="Rhea" id="RHEA:28386"/>
        <dbReference type="ChEBI" id="CHEBI:57865"/>
        <dbReference type="ChEBI" id="CHEBI:60392"/>
        <dbReference type="ChEBI" id="CHEBI:61386"/>
        <dbReference type="ChEBI" id="CHEBI:61387"/>
        <dbReference type="EC" id="2.7.8.13"/>
    </reaction>
</comment>
<comment type="cofactor">
    <cofactor evidence="1">
        <name>Mg(2+)</name>
        <dbReference type="ChEBI" id="CHEBI:18420"/>
    </cofactor>
</comment>
<comment type="pathway">
    <text evidence="1">Cell wall biogenesis; peptidoglycan biosynthesis.</text>
</comment>
<comment type="subcellular location">
    <subcellularLocation>
        <location evidence="1">Cell inner membrane</location>
        <topology evidence="1">Multi-pass membrane protein</topology>
    </subcellularLocation>
</comment>
<comment type="similarity">
    <text evidence="1">Belongs to the glycosyltransferase 4 family. MraY subfamily.</text>
</comment>
<feature type="chain" id="PRO_1000116520" description="Phospho-N-acetylmuramoyl-pentapeptide-transferase">
    <location>
        <begin position="1"/>
        <end position="360"/>
    </location>
</feature>
<feature type="transmembrane region" description="Helical" evidence="1">
    <location>
        <begin position="25"/>
        <end position="45"/>
    </location>
</feature>
<feature type="transmembrane region" description="Helical" evidence="1">
    <location>
        <begin position="73"/>
        <end position="93"/>
    </location>
</feature>
<feature type="transmembrane region" description="Helical" evidence="1">
    <location>
        <begin position="97"/>
        <end position="117"/>
    </location>
</feature>
<feature type="transmembrane region" description="Helical" evidence="1">
    <location>
        <begin position="142"/>
        <end position="162"/>
    </location>
</feature>
<feature type="transmembrane region" description="Helical" evidence="1">
    <location>
        <begin position="167"/>
        <end position="187"/>
    </location>
</feature>
<feature type="transmembrane region" description="Helical" evidence="1">
    <location>
        <begin position="199"/>
        <end position="219"/>
    </location>
</feature>
<feature type="transmembrane region" description="Helical" evidence="1">
    <location>
        <begin position="236"/>
        <end position="256"/>
    </location>
</feature>
<feature type="transmembrane region" description="Helical" evidence="1">
    <location>
        <begin position="263"/>
        <end position="283"/>
    </location>
</feature>
<feature type="transmembrane region" description="Helical" evidence="1">
    <location>
        <begin position="288"/>
        <end position="308"/>
    </location>
</feature>
<feature type="transmembrane region" description="Helical" evidence="1">
    <location>
        <begin position="338"/>
        <end position="358"/>
    </location>
</feature>
<gene>
    <name evidence="1" type="primary">mraY</name>
    <name type="ordered locus">PLES_47941</name>
</gene>
<evidence type="ECO:0000255" key="1">
    <source>
        <dbReference type="HAMAP-Rule" id="MF_00038"/>
    </source>
</evidence>
<proteinExistence type="inferred from homology"/>
<sequence>MLLLLAEYLQQFYKGFGVFQYLTLRGILSVLTALSLSLWLGPWMIRTLQIRQIGQAVRNDGPQSHLSKKGTPTMGGALILTAIAISTLLWADLSNRYVWVVLVVTLLFGAIGWVDDYRKVIEKNSRGLPSRWKYFWQSVFGIGAAVFLYMTAETPIETTLIVPMLKSVEIQLGIFFVVLTYFVIVGSSNAVNLTDGLDGLAIMPTVMVAGALGIFCYLSGNVKFAEYLLIPNVPGAGELIVFCAALVGAGLGFLWFNTYPAQVFMGDVGALALGAALGTIAVIVRQEIVLFIMGGVFVMETLSVMIQVASFKLTGRRVFRMAPIHHHFELKGWPEPRVIVRFWIITVILVLIGLATLKLR</sequence>
<protein>
    <recommendedName>
        <fullName evidence="1">Phospho-N-acetylmuramoyl-pentapeptide-transferase</fullName>
        <ecNumber evidence="1">2.7.8.13</ecNumber>
    </recommendedName>
    <alternativeName>
        <fullName evidence="1">UDP-MurNAc-pentapeptide phosphotransferase</fullName>
    </alternativeName>
</protein>
<name>MRAY_PSEA8</name>